<sequence length="598" mass="64333">MNAVTIVIASMCILAIAYRLYGTFMMVKVLKVNDDKPTPAHALEDGKDYVPTNKWVSFGHHFAAIAAAGPLVGPILAAQFGYLPGLLWLLIGAVIGGAVHDIVVLFASMRKNGKSLSEVAKDELGPVAGFCTGLSMLFIITITMAGLSMVVLHALERNPWGTFAVGITIPIAMGVGLFYKKTGNLKLASTVGFLFLMAGVFIGPWVQTTALGDFLTLDTKTLAIALPVYAFFAAALPVWLLLAPRDYLSSFMKIGVFIALIVGVFVVNPSIPFPAFTEFVKGGGPVLAGPVWPFISITIACGAISGFHAFVGSGTTPKMLNKWSDMKPVAFGAMLVECLVGIMALIAATALQPADYFAINSTPEVFRTLGMNVVHLPELSGEIGLDLEGRTGGAVTLAVGMTYIFTGMPFFSHLASYFFQFVIMFEAVFILTAIDAGTRVARYLIQDFFGEVYKPLKKTDWIPGSVFASALACLMWGYLLYSGDIGSIWALFGVSNQLMASVGLIIGATIVLKIADKRRYILTCLIPLAYLYVTVNYAGYWMVRNVYLNPEAAGYSVLNGVLSIIMLVLGFIIIVAAVKKWAQMWKDPSLRMEASIPG</sequence>
<reference key="1">
    <citation type="journal article" date="1996" name="Microbiology">
        <title>The dnaB-pheA (256 degrees-240 degrees) region of the Bacillus subtilis chromosome containing genes responsible for stress responses, the utilization of plant cell walls and primary metabolism.</title>
        <authorList>
            <person name="Wipat A."/>
            <person name="Carter N."/>
            <person name="Brignell C.S."/>
            <person name="Guy J.B."/>
            <person name="Piper K."/>
            <person name="Sanders J."/>
            <person name="Emmerson P.T."/>
            <person name="Harwood C.R."/>
        </authorList>
    </citation>
    <scope>NUCLEOTIDE SEQUENCE [GENOMIC DNA]</scope>
    <source>
        <strain>168</strain>
    </source>
</reference>
<reference key="2">
    <citation type="journal article" date="1997" name="Nature">
        <title>The complete genome sequence of the Gram-positive bacterium Bacillus subtilis.</title>
        <authorList>
            <person name="Kunst F."/>
            <person name="Ogasawara N."/>
            <person name="Moszer I."/>
            <person name="Albertini A.M."/>
            <person name="Alloni G."/>
            <person name="Azevedo V."/>
            <person name="Bertero M.G."/>
            <person name="Bessieres P."/>
            <person name="Bolotin A."/>
            <person name="Borchert S."/>
            <person name="Borriss R."/>
            <person name="Boursier L."/>
            <person name="Brans A."/>
            <person name="Braun M."/>
            <person name="Brignell S.C."/>
            <person name="Bron S."/>
            <person name="Brouillet S."/>
            <person name="Bruschi C.V."/>
            <person name="Caldwell B."/>
            <person name="Capuano V."/>
            <person name="Carter N.M."/>
            <person name="Choi S.-K."/>
            <person name="Codani J.-J."/>
            <person name="Connerton I.F."/>
            <person name="Cummings N.J."/>
            <person name="Daniel R.A."/>
            <person name="Denizot F."/>
            <person name="Devine K.M."/>
            <person name="Duesterhoeft A."/>
            <person name="Ehrlich S.D."/>
            <person name="Emmerson P.T."/>
            <person name="Entian K.-D."/>
            <person name="Errington J."/>
            <person name="Fabret C."/>
            <person name="Ferrari E."/>
            <person name="Foulger D."/>
            <person name="Fritz C."/>
            <person name="Fujita M."/>
            <person name="Fujita Y."/>
            <person name="Fuma S."/>
            <person name="Galizzi A."/>
            <person name="Galleron N."/>
            <person name="Ghim S.-Y."/>
            <person name="Glaser P."/>
            <person name="Goffeau A."/>
            <person name="Golightly E.J."/>
            <person name="Grandi G."/>
            <person name="Guiseppi G."/>
            <person name="Guy B.J."/>
            <person name="Haga K."/>
            <person name="Haiech J."/>
            <person name="Harwood C.R."/>
            <person name="Henaut A."/>
            <person name="Hilbert H."/>
            <person name="Holsappel S."/>
            <person name="Hosono S."/>
            <person name="Hullo M.-F."/>
            <person name="Itaya M."/>
            <person name="Jones L.-M."/>
            <person name="Joris B."/>
            <person name="Karamata D."/>
            <person name="Kasahara Y."/>
            <person name="Klaerr-Blanchard M."/>
            <person name="Klein C."/>
            <person name="Kobayashi Y."/>
            <person name="Koetter P."/>
            <person name="Koningstein G."/>
            <person name="Krogh S."/>
            <person name="Kumano M."/>
            <person name="Kurita K."/>
            <person name="Lapidus A."/>
            <person name="Lardinois S."/>
            <person name="Lauber J."/>
            <person name="Lazarevic V."/>
            <person name="Lee S.-M."/>
            <person name="Levine A."/>
            <person name="Liu H."/>
            <person name="Masuda S."/>
            <person name="Mauel C."/>
            <person name="Medigue C."/>
            <person name="Medina N."/>
            <person name="Mellado R.P."/>
            <person name="Mizuno M."/>
            <person name="Moestl D."/>
            <person name="Nakai S."/>
            <person name="Noback M."/>
            <person name="Noone D."/>
            <person name="O'Reilly M."/>
            <person name="Ogawa K."/>
            <person name="Ogiwara A."/>
            <person name="Oudega B."/>
            <person name="Park S.-H."/>
            <person name="Parro V."/>
            <person name="Pohl T.M."/>
            <person name="Portetelle D."/>
            <person name="Porwollik S."/>
            <person name="Prescott A.M."/>
            <person name="Presecan E."/>
            <person name="Pujic P."/>
            <person name="Purnelle B."/>
            <person name="Rapoport G."/>
            <person name="Rey M."/>
            <person name="Reynolds S."/>
            <person name="Rieger M."/>
            <person name="Rivolta C."/>
            <person name="Rocha E."/>
            <person name="Roche B."/>
            <person name="Rose M."/>
            <person name="Sadaie Y."/>
            <person name="Sato T."/>
            <person name="Scanlan E."/>
            <person name="Schleich S."/>
            <person name="Schroeter R."/>
            <person name="Scoffone F."/>
            <person name="Sekiguchi J."/>
            <person name="Sekowska A."/>
            <person name="Seror S.J."/>
            <person name="Serror P."/>
            <person name="Shin B.-S."/>
            <person name="Soldo B."/>
            <person name="Sorokin A."/>
            <person name="Tacconi E."/>
            <person name="Takagi T."/>
            <person name="Takahashi H."/>
            <person name="Takemaru K."/>
            <person name="Takeuchi M."/>
            <person name="Tamakoshi A."/>
            <person name="Tanaka T."/>
            <person name="Terpstra P."/>
            <person name="Tognoni A."/>
            <person name="Tosato V."/>
            <person name="Uchiyama S."/>
            <person name="Vandenbol M."/>
            <person name="Vannier F."/>
            <person name="Vassarotti A."/>
            <person name="Viari A."/>
            <person name="Wambutt R."/>
            <person name="Wedler E."/>
            <person name="Wedler H."/>
            <person name="Weitzenegger T."/>
            <person name="Winters P."/>
            <person name="Wipat A."/>
            <person name="Yamamoto H."/>
            <person name="Yamane K."/>
            <person name="Yasumoto K."/>
            <person name="Yata K."/>
            <person name="Yoshida K."/>
            <person name="Yoshikawa H.-F."/>
            <person name="Zumstein E."/>
            <person name="Yoshikawa H."/>
            <person name="Danchin A."/>
        </authorList>
    </citation>
    <scope>NUCLEOTIDE SEQUENCE [LARGE SCALE GENOMIC DNA]</scope>
    <source>
        <strain>168</strain>
    </source>
</reference>
<reference key="3">
    <citation type="journal article" date="2009" name="Microbiology">
        <title>From a consortium sequence to a unified sequence: the Bacillus subtilis 168 reference genome a decade later.</title>
        <authorList>
            <person name="Barbe V."/>
            <person name="Cruveiller S."/>
            <person name="Kunst F."/>
            <person name="Lenoble P."/>
            <person name="Meurice G."/>
            <person name="Sekowska A."/>
            <person name="Vallenet D."/>
            <person name="Wang T."/>
            <person name="Moszer I."/>
            <person name="Medigue C."/>
            <person name="Danchin A."/>
        </authorList>
    </citation>
    <scope>SEQUENCE REVISION TO 497</scope>
</reference>
<gene>
    <name type="primary">cstA</name>
    <name type="ordered locus">BSU28710</name>
</gene>
<proteinExistence type="inferred from homology"/>
<comment type="function">
    <text evidence="1">Involved in peptide utilization.</text>
</comment>
<comment type="subcellular location">
    <subcellularLocation>
        <location evidence="3">Cell membrane</location>
        <topology evidence="2">Multi-pass membrane protein</topology>
    </subcellularLocation>
</comment>
<comment type="similarity">
    <text evidence="3">Belongs to the peptide transporter carbon starvation (CstA) (TC 2.A.114) family.</text>
</comment>
<organism>
    <name type="scientific">Bacillus subtilis (strain 168)</name>
    <dbReference type="NCBI Taxonomy" id="224308"/>
    <lineage>
        <taxon>Bacteria</taxon>
        <taxon>Bacillati</taxon>
        <taxon>Bacillota</taxon>
        <taxon>Bacilli</taxon>
        <taxon>Bacillales</taxon>
        <taxon>Bacillaceae</taxon>
        <taxon>Bacillus</taxon>
    </lineage>
</organism>
<keyword id="KW-1003">Cell membrane</keyword>
<keyword id="KW-0472">Membrane</keyword>
<keyword id="KW-0571">Peptide transport</keyword>
<keyword id="KW-0653">Protein transport</keyword>
<keyword id="KW-1185">Reference proteome</keyword>
<keyword id="KW-0812">Transmembrane</keyword>
<keyword id="KW-1133">Transmembrane helix</keyword>
<keyword id="KW-0813">Transport</keyword>
<protein>
    <recommendedName>
        <fullName evidence="3">Peptide transporter CstA</fullName>
    </recommendedName>
    <alternativeName>
        <fullName evidence="3">Carbon starvation protein A homolog</fullName>
    </alternativeName>
</protein>
<name>CSTA_BACSU</name>
<accession>P94532</accession>
<feature type="chain" id="PRO_0000190045" description="Peptide transporter CstA">
    <location>
        <begin position="1"/>
        <end position="598"/>
    </location>
</feature>
<feature type="transmembrane region" description="Helical" evidence="2">
    <location>
        <begin position="6"/>
        <end position="26"/>
    </location>
</feature>
<feature type="transmembrane region" description="Helical" evidence="2">
    <location>
        <begin position="62"/>
        <end position="82"/>
    </location>
</feature>
<feature type="transmembrane region" description="Helical" evidence="2">
    <location>
        <begin position="86"/>
        <end position="106"/>
    </location>
</feature>
<feature type="transmembrane region" description="Helical" evidence="2">
    <location>
        <begin position="132"/>
        <end position="152"/>
    </location>
</feature>
<feature type="transmembrane region" description="Helical" evidence="2">
    <location>
        <begin position="159"/>
        <end position="179"/>
    </location>
</feature>
<feature type="transmembrane region" description="Helical" evidence="2">
    <location>
        <begin position="191"/>
        <end position="211"/>
    </location>
</feature>
<feature type="transmembrane region" description="Helical" evidence="2">
    <location>
        <begin position="222"/>
        <end position="242"/>
    </location>
</feature>
<feature type="transmembrane region" description="Helical" evidence="2">
    <location>
        <begin position="254"/>
        <end position="274"/>
    </location>
</feature>
<feature type="transmembrane region" description="Helical" evidence="2">
    <location>
        <begin position="291"/>
        <end position="311"/>
    </location>
</feature>
<feature type="transmembrane region" description="Helical" evidence="2">
    <location>
        <begin position="328"/>
        <end position="348"/>
    </location>
</feature>
<feature type="transmembrane region" description="Helical" evidence="2">
    <location>
        <begin position="391"/>
        <end position="411"/>
    </location>
</feature>
<feature type="transmembrane region" description="Helical" evidence="2">
    <location>
        <begin position="414"/>
        <end position="434"/>
    </location>
</feature>
<feature type="transmembrane region" description="Helical" evidence="2">
    <location>
        <begin position="461"/>
        <end position="481"/>
    </location>
</feature>
<feature type="transmembrane region" description="Helical" evidence="2">
    <location>
        <begin position="488"/>
        <end position="508"/>
    </location>
</feature>
<feature type="transmembrane region" description="Helical" evidence="2">
    <location>
        <begin position="521"/>
        <end position="541"/>
    </location>
</feature>
<feature type="transmembrane region" description="Helical" evidence="2">
    <location>
        <begin position="557"/>
        <end position="577"/>
    </location>
</feature>
<feature type="sequence conflict" description="In Ref. 1; CAA99596." evidence="3" ref="1">
    <original>Q</original>
    <variation>R</variation>
    <location>
        <position position="497"/>
    </location>
</feature>
<dbReference type="EMBL" id="Z75208">
    <property type="protein sequence ID" value="CAA99596.1"/>
    <property type="molecule type" value="Genomic_DNA"/>
</dbReference>
<dbReference type="EMBL" id="AL009126">
    <property type="protein sequence ID" value="CAB14831.2"/>
    <property type="molecule type" value="Genomic_DNA"/>
</dbReference>
<dbReference type="PIR" id="A69609">
    <property type="entry name" value="A69609"/>
</dbReference>
<dbReference type="RefSeq" id="NP_390749.2">
    <property type="nucleotide sequence ID" value="NC_000964.3"/>
</dbReference>
<dbReference type="RefSeq" id="WP_003229512.1">
    <property type="nucleotide sequence ID" value="NZ_OZ025638.1"/>
</dbReference>
<dbReference type="FunCoup" id="P94532">
    <property type="interactions" value="104"/>
</dbReference>
<dbReference type="IntAct" id="P94532">
    <property type="interactions" value="1"/>
</dbReference>
<dbReference type="STRING" id="224308.BSU28710"/>
<dbReference type="PaxDb" id="224308-BSU28710"/>
<dbReference type="EnsemblBacteria" id="CAB14831">
    <property type="protein sequence ID" value="CAB14831"/>
    <property type="gene ID" value="BSU_28710"/>
</dbReference>
<dbReference type="GeneID" id="937970"/>
<dbReference type="KEGG" id="bsu:BSU28710"/>
<dbReference type="PATRIC" id="fig|224308.179.peg.3119"/>
<dbReference type="eggNOG" id="COG1966">
    <property type="taxonomic scope" value="Bacteria"/>
</dbReference>
<dbReference type="InParanoid" id="P94532"/>
<dbReference type="OrthoDB" id="9761224at2"/>
<dbReference type="PhylomeDB" id="P94532"/>
<dbReference type="BioCyc" id="BSUB:BSU28710-MONOMER"/>
<dbReference type="Proteomes" id="UP000001570">
    <property type="component" value="Chromosome"/>
</dbReference>
<dbReference type="GO" id="GO:0005886">
    <property type="term" value="C:plasma membrane"/>
    <property type="evidence" value="ECO:0000318"/>
    <property type="project" value="GO_Central"/>
</dbReference>
<dbReference type="GO" id="GO:0031669">
    <property type="term" value="P:cellular response to nutrient levels"/>
    <property type="evidence" value="ECO:0000318"/>
    <property type="project" value="GO_Central"/>
</dbReference>
<dbReference type="GO" id="GO:0009267">
    <property type="term" value="P:cellular response to starvation"/>
    <property type="evidence" value="ECO:0007669"/>
    <property type="project" value="InterPro"/>
</dbReference>
<dbReference type="GO" id="GO:0015833">
    <property type="term" value="P:peptide transport"/>
    <property type="evidence" value="ECO:0007669"/>
    <property type="project" value="UniProtKB-KW"/>
</dbReference>
<dbReference type="GO" id="GO:0015031">
    <property type="term" value="P:protein transport"/>
    <property type="evidence" value="ECO:0007669"/>
    <property type="project" value="UniProtKB-KW"/>
</dbReference>
<dbReference type="InterPro" id="IPR051605">
    <property type="entry name" value="CstA"/>
</dbReference>
<dbReference type="InterPro" id="IPR003706">
    <property type="entry name" value="CstA_N"/>
</dbReference>
<dbReference type="PANTHER" id="PTHR30252">
    <property type="entry name" value="INNER MEMBRANE PEPTIDE TRANSPORTER"/>
    <property type="match status" value="1"/>
</dbReference>
<dbReference type="PANTHER" id="PTHR30252:SF3">
    <property type="entry name" value="PYRUVATE_PROTON SYMPORTER BTST"/>
    <property type="match status" value="1"/>
</dbReference>
<dbReference type="Pfam" id="PF02554">
    <property type="entry name" value="CstA"/>
    <property type="match status" value="1"/>
</dbReference>
<evidence type="ECO:0000250" key="1">
    <source>
        <dbReference type="UniProtKB" id="P15078"/>
    </source>
</evidence>
<evidence type="ECO:0000255" key="2"/>
<evidence type="ECO:0000305" key="3"/>